<reference key="1">
    <citation type="submission" date="2009-01" db="EMBL/GenBank/DDBJ databases">
        <title>Complete sequence of Chloroflexus sp. Y-400-fl.</title>
        <authorList>
            <consortium name="US DOE Joint Genome Institute"/>
            <person name="Lucas S."/>
            <person name="Copeland A."/>
            <person name="Lapidus A."/>
            <person name="Glavina del Rio T."/>
            <person name="Dalin E."/>
            <person name="Tice H."/>
            <person name="Bruce D."/>
            <person name="Goodwin L."/>
            <person name="Pitluck S."/>
            <person name="Sims D."/>
            <person name="Kiss H."/>
            <person name="Brettin T."/>
            <person name="Detter J.C."/>
            <person name="Han C."/>
            <person name="Larimer F."/>
            <person name="Land M."/>
            <person name="Hauser L."/>
            <person name="Kyrpides N."/>
            <person name="Ovchinnikova G."/>
            <person name="Bryant D.A."/>
            <person name="Richardson P."/>
        </authorList>
    </citation>
    <scope>NUCLEOTIDE SEQUENCE [LARGE SCALE GENOMIC DNA]</scope>
    <source>
        <strain>ATCC 29364 / DSM 637 / Y-400-fl</strain>
    </source>
</reference>
<name>RS5_CHLSY</name>
<accession>B9LJE9</accession>
<keyword id="KW-0687">Ribonucleoprotein</keyword>
<keyword id="KW-0689">Ribosomal protein</keyword>
<keyword id="KW-0694">RNA-binding</keyword>
<keyword id="KW-0699">rRNA-binding</keyword>
<sequence length="178" mass="19344">MKRERINPETLELEERVVQINRVSKVVKGGRRFSFSTVVVVGDGKGHVGIGMGKAAEVPDAIRKGAEAAKRNLIRVPLVHATVPHEVVTKFAATKVMLRPAAPGTGVIAGRGVRPVVEAAGIKDLLSKVYGSNNPVNVVKATFKALSEMTSLHEMASRRDMTPQELMERRTRRETEAA</sequence>
<protein>
    <recommendedName>
        <fullName evidence="1">Small ribosomal subunit protein uS5</fullName>
    </recommendedName>
    <alternativeName>
        <fullName evidence="3">30S ribosomal protein S5</fullName>
    </alternativeName>
</protein>
<proteinExistence type="inferred from homology"/>
<dbReference type="EMBL" id="CP001364">
    <property type="protein sequence ID" value="ACM53965.1"/>
    <property type="molecule type" value="Genomic_DNA"/>
</dbReference>
<dbReference type="SMR" id="B9LJE9"/>
<dbReference type="KEGG" id="chl:Chy400_2573"/>
<dbReference type="HOGENOM" id="CLU_065898_2_2_0"/>
<dbReference type="OrthoDB" id="9809045at2"/>
<dbReference type="GO" id="GO:0015935">
    <property type="term" value="C:small ribosomal subunit"/>
    <property type="evidence" value="ECO:0007669"/>
    <property type="project" value="InterPro"/>
</dbReference>
<dbReference type="GO" id="GO:0019843">
    <property type="term" value="F:rRNA binding"/>
    <property type="evidence" value="ECO:0007669"/>
    <property type="project" value="UniProtKB-UniRule"/>
</dbReference>
<dbReference type="GO" id="GO:0003735">
    <property type="term" value="F:structural constituent of ribosome"/>
    <property type="evidence" value="ECO:0007669"/>
    <property type="project" value="InterPro"/>
</dbReference>
<dbReference type="GO" id="GO:0006412">
    <property type="term" value="P:translation"/>
    <property type="evidence" value="ECO:0007669"/>
    <property type="project" value="UniProtKB-UniRule"/>
</dbReference>
<dbReference type="FunFam" id="3.30.160.20:FF:000001">
    <property type="entry name" value="30S ribosomal protein S5"/>
    <property type="match status" value="1"/>
</dbReference>
<dbReference type="FunFam" id="3.30.230.10:FF:000002">
    <property type="entry name" value="30S ribosomal protein S5"/>
    <property type="match status" value="1"/>
</dbReference>
<dbReference type="Gene3D" id="3.30.160.20">
    <property type="match status" value="1"/>
</dbReference>
<dbReference type="Gene3D" id="3.30.230.10">
    <property type="match status" value="1"/>
</dbReference>
<dbReference type="HAMAP" id="MF_01307_B">
    <property type="entry name" value="Ribosomal_uS5_B"/>
    <property type="match status" value="1"/>
</dbReference>
<dbReference type="InterPro" id="IPR020568">
    <property type="entry name" value="Ribosomal_Su5_D2-typ_SF"/>
</dbReference>
<dbReference type="InterPro" id="IPR000851">
    <property type="entry name" value="Ribosomal_uS5"/>
</dbReference>
<dbReference type="InterPro" id="IPR005712">
    <property type="entry name" value="Ribosomal_uS5_bac-type"/>
</dbReference>
<dbReference type="InterPro" id="IPR005324">
    <property type="entry name" value="Ribosomal_uS5_C"/>
</dbReference>
<dbReference type="InterPro" id="IPR013810">
    <property type="entry name" value="Ribosomal_uS5_N"/>
</dbReference>
<dbReference type="InterPro" id="IPR018192">
    <property type="entry name" value="Ribosomal_uS5_N_CS"/>
</dbReference>
<dbReference type="InterPro" id="IPR014721">
    <property type="entry name" value="Ribsml_uS5_D2-typ_fold_subgr"/>
</dbReference>
<dbReference type="NCBIfam" id="TIGR01021">
    <property type="entry name" value="rpsE_bact"/>
    <property type="match status" value="1"/>
</dbReference>
<dbReference type="PANTHER" id="PTHR48277">
    <property type="entry name" value="MITOCHONDRIAL RIBOSOMAL PROTEIN S5"/>
    <property type="match status" value="1"/>
</dbReference>
<dbReference type="PANTHER" id="PTHR48277:SF1">
    <property type="entry name" value="MITOCHONDRIAL RIBOSOMAL PROTEIN S5"/>
    <property type="match status" value="1"/>
</dbReference>
<dbReference type="Pfam" id="PF00333">
    <property type="entry name" value="Ribosomal_S5"/>
    <property type="match status" value="1"/>
</dbReference>
<dbReference type="Pfam" id="PF03719">
    <property type="entry name" value="Ribosomal_S5_C"/>
    <property type="match status" value="1"/>
</dbReference>
<dbReference type="SUPFAM" id="SSF54768">
    <property type="entry name" value="dsRNA-binding domain-like"/>
    <property type="match status" value="1"/>
</dbReference>
<dbReference type="SUPFAM" id="SSF54211">
    <property type="entry name" value="Ribosomal protein S5 domain 2-like"/>
    <property type="match status" value="1"/>
</dbReference>
<dbReference type="PROSITE" id="PS00585">
    <property type="entry name" value="RIBOSOMAL_S5"/>
    <property type="match status" value="1"/>
</dbReference>
<dbReference type="PROSITE" id="PS50881">
    <property type="entry name" value="S5_DSRBD"/>
    <property type="match status" value="1"/>
</dbReference>
<comment type="function">
    <text evidence="1">With S4 and S12 plays an important role in translational accuracy.</text>
</comment>
<comment type="function">
    <text evidence="1">Located at the back of the 30S subunit body where it stabilizes the conformation of the head with respect to the body.</text>
</comment>
<comment type="subunit">
    <text evidence="1">Part of the 30S ribosomal subunit. Contacts proteins S4 and S8.</text>
</comment>
<comment type="domain">
    <text>The N-terminal domain interacts with the head of the 30S subunit; the C-terminal domain interacts with the body and contacts protein S4. The interaction surface between S4 and S5 is involved in control of translational fidelity.</text>
</comment>
<comment type="similarity">
    <text evidence="1">Belongs to the universal ribosomal protein uS5 family.</text>
</comment>
<feature type="chain" id="PRO_1000165447" description="Small ribosomal subunit protein uS5">
    <location>
        <begin position="1"/>
        <end position="178"/>
    </location>
</feature>
<feature type="domain" description="S5 DRBM" evidence="1">
    <location>
        <begin position="13"/>
        <end position="76"/>
    </location>
</feature>
<feature type="region of interest" description="Disordered" evidence="2">
    <location>
        <begin position="156"/>
        <end position="178"/>
    </location>
</feature>
<organism>
    <name type="scientific">Chloroflexus aurantiacus (strain ATCC 29364 / DSM 637 / Y-400-fl)</name>
    <dbReference type="NCBI Taxonomy" id="480224"/>
    <lineage>
        <taxon>Bacteria</taxon>
        <taxon>Bacillati</taxon>
        <taxon>Chloroflexota</taxon>
        <taxon>Chloroflexia</taxon>
        <taxon>Chloroflexales</taxon>
        <taxon>Chloroflexineae</taxon>
        <taxon>Chloroflexaceae</taxon>
        <taxon>Chloroflexus</taxon>
    </lineage>
</organism>
<evidence type="ECO:0000255" key="1">
    <source>
        <dbReference type="HAMAP-Rule" id="MF_01307"/>
    </source>
</evidence>
<evidence type="ECO:0000256" key="2">
    <source>
        <dbReference type="SAM" id="MobiDB-lite"/>
    </source>
</evidence>
<evidence type="ECO:0000305" key="3"/>
<gene>
    <name evidence="1" type="primary">rpsE</name>
    <name type="ordered locus">Chy400_2573</name>
</gene>